<sequence>MSKVSSAVLRQGVATILKEKKERKFVETVELQIALKNYDPDKDKRFAGSVKLPNITKANYKVCVLGDAQACEAAQKENIPFMDVDALKALNKDKKLVKKLARKYNAFLASDSVLRQLQKILGPGLNKAGKFPTLLGKNEDLKVKINELQCQVKFQLKKVLCMGVAVGNVKLTEDQLVANIERSISFLVSLLKKGWQNIKCLYIKSSMGAPIKIY</sequence>
<comment type="function">
    <text evidence="1">Component of the large ribosomal subunit. The ribosome is a large ribonucleoprotein complex responsible for the synthesis of proteins in the cell.</text>
</comment>
<comment type="subunit">
    <text evidence="1">Component of the large ribosomal subunit.</text>
</comment>
<comment type="subcellular location">
    <subcellularLocation>
        <location evidence="1">Cytoplasm</location>
    </subcellularLocation>
</comment>
<comment type="similarity">
    <text evidence="2">Belongs to the universal ribosomal protein uL1 family.</text>
</comment>
<protein>
    <recommendedName>
        <fullName evidence="2">Large ribosomal subunit protein uL1</fullName>
    </recommendedName>
    <alternativeName>
        <fullName>60S ribosomal protein L10a</fullName>
    </alternativeName>
</protein>
<feature type="chain" id="PRO_0000125828" description="Large ribosomal subunit protein uL1">
    <location>
        <begin position="1"/>
        <end position="214"/>
    </location>
</feature>
<feature type="sequence conflict" description="In Ref. 2; BAA22009." evidence="2" ref="2">
    <original>L</original>
    <variation>S</variation>
    <location>
        <position position="9"/>
    </location>
</feature>
<feature type="sequence conflict" description="In Ref. 2; BAA22009." evidence="2" ref="2">
    <original>VETVELQI</original>
    <variation>GETGELHL</variation>
    <location>
        <begin position="26"/>
        <end position="33"/>
    </location>
</feature>
<feature type="sequence conflict" description="In Ref. 2; BAA22009." evidence="2" ref="2">
    <original>FAGSVKLPNI</original>
    <variation>CGGTDKLPNV</variation>
    <location>
        <begin position="46"/>
        <end position="55"/>
    </location>
</feature>
<feature type="sequence conflict" description="In Ref. 2; BAA22009." evidence="2" ref="2">
    <original>F</original>
    <variation>H</variation>
    <location>
        <position position="81"/>
    </location>
</feature>
<feature type="sequence conflict" description="In Ref. 2; BAA22009." evidence="2" ref="2">
    <original>NKDKKLV</original>
    <variation>YKDKMFF</variation>
    <location>
        <begin position="91"/>
        <end position="97"/>
    </location>
</feature>
<feature type="sequence conflict" description="In Ref. 2; BAA22009." evidence="2" ref="2">
    <original>AFLASDSVL</original>
    <variation>TFLGSDSVG</variation>
    <location>
        <begin position="106"/>
        <end position="114"/>
    </location>
</feature>
<feature type="sequence conflict" description="In Ref. 2; BAA22009." evidence="2" ref="2">
    <original>AGKFPTL</original>
    <variation>GGKFPPP</variation>
    <location>
        <begin position="128"/>
        <end position="134"/>
    </location>
</feature>
<feature type="sequence conflict" description="In Ref. 2; BAA22009." evidence="2" ref="2">
    <original>KF</original>
    <variation>NS</variation>
    <location>
        <begin position="153"/>
        <end position="154"/>
    </location>
</feature>
<feature type="sequence conflict" description="In Ref. 2; BAA22009." evidence="2" ref="2">
    <original>AV</original>
    <variation>GG</variation>
    <location>
        <begin position="165"/>
        <end position="166"/>
    </location>
</feature>
<accession>O15613</accession>
<dbReference type="EMBL" id="DS571390">
    <property type="protein sequence ID" value="EAL48615.1"/>
    <property type="molecule type" value="Genomic_DNA"/>
</dbReference>
<dbReference type="EMBL" id="AB002771">
    <property type="protein sequence ID" value="BAA22009.1"/>
    <property type="molecule type" value="mRNA"/>
</dbReference>
<dbReference type="RefSeq" id="XP_001913403.1">
    <property type="nucleotide sequence ID" value="XM_001913368.1"/>
</dbReference>
<dbReference type="RefSeq" id="XP_654001.1">
    <property type="nucleotide sequence ID" value="XM_648909.1"/>
</dbReference>
<dbReference type="SMR" id="O15613"/>
<dbReference type="GeneID" id="3408314"/>
<dbReference type="KEGG" id="ehi:EHI_012480"/>
<dbReference type="KEGG" id="ehi:EHI_135790"/>
<dbReference type="VEuPathDB" id="AmoebaDB:EHI5A_059780"/>
<dbReference type="VEuPathDB" id="AmoebaDB:EHI_135790"/>
<dbReference type="VEuPathDB" id="AmoebaDB:KM1_102940"/>
<dbReference type="HOGENOM" id="CLU_062853_3_0_1"/>
<dbReference type="OMA" id="GPRNKMP"/>
<dbReference type="OrthoDB" id="14163at2759"/>
<dbReference type="Proteomes" id="UP000001926">
    <property type="component" value="Partially assembled WGS sequence"/>
</dbReference>
<dbReference type="GO" id="GO:0022625">
    <property type="term" value="C:cytosolic large ribosomal subunit"/>
    <property type="evidence" value="ECO:0000318"/>
    <property type="project" value="GO_Central"/>
</dbReference>
<dbReference type="GO" id="GO:0003723">
    <property type="term" value="F:RNA binding"/>
    <property type="evidence" value="ECO:0000318"/>
    <property type="project" value="GO_Central"/>
</dbReference>
<dbReference type="GO" id="GO:0003735">
    <property type="term" value="F:structural constituent of ribosome"/>
    <property type="evidence" value="ECO:0007669"/>
    <property type="project" value="InterPro"/>
</dbReference>
<dbReference type="GO" id="GO:0006412">
    <property type="term" value="P:translation"/>
    <property type="evidence" value="ECO:0007669"/>
    <property type="project" value="InterPro"/>
</dbReference>
<dbReference type="CDD" id="cd00403">
    <property type="entry name" value="Ribosomal_L1"/>
    <property type="match status" value="1"/>
</dbReference>
<dbReference type="FunFam" id="3.40.50.790:FF:000002">
    <property type="entry name" value="Ribosomal protein"/>
    <property type="match status" value="1"/>
</dbReference>
<dbReference type="FunFam" id="3.30.190.20:FF:000009">
    <property type="entry name" value="Ribosomal protein L10a"/>
    <property type="match status" value="1"/>
</dbReference>
<dbReference type="Gene3D" id="3.30.190.20">
    <property type="match status" value="1"/>
</dbReference>
<dbReference type="Gene3D" id="3.40.50.790">
    <property type="match status" value="1"/>
</dbReference>
<dbReference type="InterPro" id="IPR050257">
    <property type="entry name" value="eL8/uL1-like"/>
</dbReference>
<dbReference type="InterPro" id="IPR002143">
    <property type="entry name" value="Ribosomal_uL1"/>
</dbReference>
<dbReference type="InterPro" id="IPR023674">
    <property type="entry name" value="Ribosomal_uL1-like"/>
</dbReference>
<dbReference type="InterPro" id="IPR028364">
    <property type="entry name" value="Ribosomal_uL1/biogenesis"/>
</dbReference>
<dbReference type="InterPro" id="IPR016095">
    <property type="entry name" value="Ribosomal_uL1_3-a/b-sand"/>
</dbReference>
<dbReference type="PANTHER" id="PTHR23105">
    <property type="entry name" value="RIBOSOMAL PROTEIN L7AE FAMILY MEMBER"/>
    <property type="match status" value="1"/>
</dbReference>
<dbReference type="Pfam" id="PF00687">
    <property type="entry name" value="Ribosomal_L1"/>
    <property type="match status" value="1"/>
</dbReference>
<dbReference type="PIRSF" id="PIRSF002155">
    <property type="entry name" value="Ribosomal_L1"/>
    <property type="match status" value="1"/>
</dbReference>
<dbReference type="SUPFAM" id="SSF56808">
    <property type="entry name" value="Ribosomal protein L1"/>
    <property type="match status" value="1"/>
</dbReference>
<dbReference type="PROSITE" id="PS01199">
    <property type="entry name" value="RIBOSOMAL_L1"/>
    <property type="match status" value="1"/>
</dbReference>
<reference evidence="4" key="1">
    <citation type="journal article" date="2005" name="Nature">
        <title>The genome of the protist parasite Entamoeba histolytica.</title>
        <authorList>
            <person name="Loftus B.J."/>
            <person name="Anderson I."/>
            <person name="Davies R."/>
            <person name="Alsmark U.C."/>
            <person name="Samuelson J."/>
            <person name="Amedeo P."/>
            <person name="Roncaglia P."/>
            <person name="Berriman M."/>
            <person name="Hirt R.P."/>
            <person name="Mann B.J."/>
            <person name="Nozaki T."/>
            <person name="Suh B."/>
            <person name="Pop M."/>
            <person name="Duchene M."/>
            <person name="Ackers J."/>
            <person name="Tannich E."/>
            <person name="Leippe M."/>
            <person name="Hofer M."/>
            <person name="Bruchhaus I."/>
            <person name="Willhoeft U."/>
            <person name="Bhattacharya A."/>
            <person name="Chillingworth T."/>
            <person name="Churcher C.M."/>
            <person name="Hance Z."/>
            <person name="Harris B."/>
            <person name="Harris D."/>
            <person name="Jagels K."/>
            <person name="Moule S."/>
            <person name="Mungall K.L."/>
            <person name="Ormond D."/>
            <person name="Squares R."/>
            <person name="Whitehead S."/>
            <person name="Quail M.A."/>
            <person name="Rabbinowitsch E."/>
            <person name="Norbertczak H."/>
            <person name="Price C."/>
            <person name="Wang Z."/>
            <person name="Guillen N."/>
            <person name="Gilchrist C."/>
            <person name="Stroup S.E."/>
            <person name="Bhattacharya S."/>
            <person name="Lohia A."/>
            <person name="Foster P.G."/>
            <person name="Sicheritz-Ponten T."/>
            <person name="Weber C."/>
            <person name="Singh U."/>
            <person name="Mukherjee C."/>
            <person name="El-Sayed N.M.A."/>
            <person name="Petri W.A."/>
            <person name="Clark C.G."/>
            <person name="Embley T.M."/>
            <person name="Barrell B.G."/>
            <person name="Fraser C.M."/>
            <person name="Hall N."/>
        </authorList>
    </citation>
    <scope>NUCLEOTIDE SEQUENCE [LARGE SCALE GENOMIC DNA]</scope>
    <source>
        <strain evidence="4">ATCC 30459 / HM-1:IMSS / ABRM</strain>
    </source>
</reference>
<reference evidence="3" key="2">
    <citation type="journal article" date="1997" name="Biochem. Biophys. Res. Commun.">
        <title>Analysis of expressed sequence tags (ESTs) of the parasitic protozoa Entamoeba histolytica.</title>
        <authorList>
            <person name="Tanaka T."/>
            <person name="Tanaka M."/>
            <person name="Mitsui Y."/>
        </authorList>
    </citation>
    <scope>NUCLEOTIDE SEQUENCE [MRNA] OF 5-169</scope>
    <source>
        <strain evidence="3">ATCC 30459 / HM-1:IMSS / ABRM</strain>
    </source>
</reference>
<keyword id="KW-0963">Cytoplasm</keyword>
<keyword id="KW-1185">Reference proteome</keyword>
<keyword id="KW-0687">Ribonucleoprotein</keyword>
<keyword id="KW-0689">Ribosomal protein</keyword>
<organism evidence="4">
    <name type="scientific">Entamoeba histolytica (strain ATCC 30459 / HM-1:IMSS / ABRM)</name>
    <dbReference type="NCBI Taxonomy" id="294381"/>
    <lineage>
        <taxon>Eukaryota</taxon>
        <taxon>Amoebozoa</taxon>
        <taxon>Evosea</taxon>
        <taxon>Archamoebae</taxon>
        <taxon>Mastigamoebida</taxon>
        <taxon>Entamoebidae</taxon>
        <taxon>Entamoeba</taxon>
    </lineage>
</organism>
<name>RL10A_ENTH1</name>
<proteinExistence type="evidence at transcript level"/>
<evidence type="ECO:0000250" key="1">
    <source>
        <dbReference type="UniProtKB" id="P62906"/>
    </source>
</evidence>
<evidence type="ECO:0000305" key="2"/>
<evidence type="ECO:0000312" key="3">
    <source>
        <dbReference type="EMBL" id="BAA22009.1"/>
    </source>
</evidence>
<evidence type="ECO:0000312" key="4">
    <source>
        <dbReference type="EMBL" id="EAL48615.1"/>
    </source>
</evidence>
<gene>
    <name type="primary">RPL10A</name>
    <name evidence="4" type="ORF">EHI_135790</name>
</gene>